<sequence length="280" mass="30868">MPFGNYKTAISARATDKEILKKAQDGGYVSAAHIYGLESKLLDGVSVAADTEDGCNAAPKVATTPEEVLNAAGAKYTVSPNVSVLKDAVREYALEKVGIVGTPCQVQAIRKLIKYPMGFRHTDSRIVMGIFCMENFSYEGMKAIVEEYAGIRMDDVLKTDIGKGKFWVYSKYGDVKSVKLKDTHMYEQKSCHICTDYTAELADISTGSVGSPDGWSTIFIRTEKGEAYINKMVEAGVLETKNIDDVKPGLDLVQKLSLQKKEKNEKEIVQRRELGLPVPY</sequence>
<comment type="function">
    <text>Reduces the physiological low-potential two-electron acceptor coenzyme F420, and the artificial one-electron acceptor methylviologen.</text>
</comment>
<comment type="catalytic activity">
    <reaction>
        <text>oxidized coenzyme F420-(gamma-L-Glu)(n) + H2 + H(+) = reduced coenzyme F420-(gamma-L-Glu)(n)</text>
        <dbReference type="Rhea" id="RHEA:23760"/>
        <dbReference type="Rhea" id="RHEA-COMP:12939"/>
        <dbReference type="Rhea" id="RHEA-COMP:14378"/>
        <dbReference type="ChEBI" id="CHEBI:15378"/>
        <dbReference type="ChEBI" id="CHEBI:18276"/>
        <dbReference type="ChEBI" id="CHEBI:133980"/>
        <dbReference type="ChEBI" id="CHEBI:139511"/>
        <dbReference type="EC" id="1.12.98.1"/>
    </reaction>
</comment>
<comment type="cofactor">
    <cofactor>
        <name>Ni(2+)</name>
        <dbReference type="ChEBI" id="CHEBI:49786"/>
    </cofactor>
</comment>
<comment type="cofactor">
    <cofactor>
        <name>iron-sulfur cluster</name>
        <dbReference type="ChEBI" id="CHEBI:30408"/>
    </cofactor>
</comment>
<comment type="cofactor">
    <cofactor>
        <name>FAD</name>
        <dbReference type="ChEBI" id="CHEBI:57692"/>
    </cofactor>
</comment>
<comment type="subunit">
    <text>Complex of alpha, beta and gamma subunits.</text>
</comment>
<comment type="similarity">
    <text evidence="1">Belongs to the FrhB family.</text>
</comment>
<proteinExistence type="inferred from homology"/>
<protein>
    <recommendedName>
        <fullName>Coenzyme F420 hydrogenase subunit beta</fullName>
        <ecNumber>1.12.98.1</ecNumber>
    </recommendedName>
    <alternativeName>
        <fullName>8-hydroxy-5-deazaflavin-reducing hydrogenase subunit beta</fullName>
        <shortName>FRH</shortName>
    </alternativeName>
</protein>
<keyword id="KW-0408">Iron</keyword>
<keyword id="KW-0411">Iron-sulfur</keyword>
<keyword id="KW-0479">Metal-binding</keyword>
<keyword id="KW-0560">Oxidoreductase</keyword>
<evidence type="ECO:0000305" key="1"/>
<gene>
    <name type="primary">frhB</name>
    <name type="synonym">frcB</name>
</gene>
<feature type="chain" id="PRO_0000159230" description="Coenzyme F420 hydrogenase subunit beta">
    <location>
        <begin position="1"/>
        <end position="280"/>
    </location>
</feature>
<accession>Q00391</accession>
<reference key="1">
    <citation type="journal article" date="1992" name="Mol. Gen. Genet.">
        <title>Methanococcus voltae harbors four gene clusters potentially encoding two [NiFe] and two [NiFeSe] hydrogenases, each of the cofactor F420-reducing or F420-non-reducing types.</title>
        <authorList>
            <person name="Halboth S."/>
            <person name="Klein A."/>
        </authorList>
    </citation>
    <scope>NUCLEOTIDE SEQUENCE [GENOMIC DNA]</scope>
    <source>
        <strain>ATCC 33273 / DSM 1537 / NBRC 100457 / OCM 70 / PS</strain>
    </source>
</reference>
<name>FRHB_METVO</name>
<dbReference type="EC" id="1.12.98.1"/>
<dbReference type="EMBL" id="X61201">
    <property type="protein sequence ID" value="CAA43499.1"/>
    <property type="molecule type" value="Genomic_DNA"/>
</dbReference>
<dbReference type="PIR" id="S16724">
    <property type="entry name" value="S16724"/>
</dbReference>
<dbReference type="SMR" id="Q00391"/>
<dbReference type="GO" id="GO:0050454">
    <property type="term" value="F:coenzyme F420 hydrogenase activity"/>
    <property type="evidence" value="ECO:0007669"/>
    <property type="project" value="UniProtKB-EC"/>
</dbReference>
<dbReference type="GO" id="GO:0050660">
    <property type="term" value="F:flavin adenine dinucleotide binding"/>
    <property type="evidence" value="ECO:0007669"/>
    <property type="project" value="InterPro"/>
</dbReference>
<dbReference type="GO" id="GO:0051536">
    <property type="term" value="F:iron-sulfur cluster binding"/>
    <property type="evidence" value="ECO:0007669"/>
    <property type="project" value="UniProtKB-KW"/>
</dbReference>
<dbReference type="GO" id="GO:0016151">
    <property type="term" value="F:nickel cation binding"/>
    <property type="evidence" value="ECO:0007669"/>
    <property type="project" value="InterPro"/>
</dbReference>
<dbReference type="GO" id="GO:0052592">
    <property type="term" value="F:oxidoreductase activity, acting on CH or CH2 groups, with an iron-sulfur protein as acceptor"/>
    <property type="evidence" value="ECO:0007669"/>
    <property type="project" value="TreeGrafter"/>
</dbReference>
<dbReference type="Gene3D" id="3.10.450.750">
    <property type="match status" value="1"/>
</dbReference>
<dbReference type="InterPro" id="IPR007516">
    <property type="entry name" value="Co_F420_Hydgase/DH_bsu_N"/>
</dbReference>
<dbReference type="InterPro" id="IPR045220">
    <property type="entry name" value="FRHB/FDHB/HCAR-like"/>
</dbReference>
<dbReference type="InterPro" id="IPR017679">
    <property type="entry name" value="FrhB_archaea"/>
</dbReference>
<dbReference type="InterPro" id="IPR007525">
    <property type="entry name" value="FrhB_FdhB_C"/>
</dbReference>
<dbReference type="NCBIfam" id="TIGR03289">
    <property type="entry name" value="frhB"/>
    <property type="match status" value="1"/>
</dbReference>
<dbReference type="NCBIfam" id="NF006807">
    <property type="entry name" value="PRK09325.1"/>
    <property type="match status" value="1"/>
</dbReference>
<dbReference type="PANTHER" id="PTHR31332">
    <property type="entry name" value="7-HYDROXYMETHYL CHLOROPHYLL A REDUCTASE, CHLOROPLASTIC"/>
    <property type="match status" value="1"/>
</dbReference>
<dbReference type="PANTHER" id="PTHR31332:SF6">
    <property type="entry name" value="FORMATE DEHYDROGENASE SUBUNIT BETA"/>
    <property type="match status" value="1"/>
</dbReference>
<dbReference type="Pfam" id="PF04432">
    <property type="entry name" value="FrhB_FdhB_C"/>
    <property type="match status" value="1"/>
</dbReference>
<dbReference type="Pfam" id="PF04422">
    <property type="entry name" value="FrhB_FdhB_N"/>
    <property type="match status" value="1"/>
</dbReference>
<organism>
    <name type="scientific">Methanococcus voltae</name>
    <dbReference type="NCBI Taxonomy" id="2188"/>
    <lineage>
        <taxon>Archaea</taxon>
        <taxon>Methanobacteriati</taxon>
        <taxon>Methanobacteriota</taxon>
        <taxon>Methanomada group</taxon>
        <taxon>Methanococci</taxon>
        <taxon>Methanococcales</taxon>
        <taxon>Methanococcaceae</taxon>
        <taxon>Methanococcus</taxon>
    </lineage>
</organism>